<evidence type="ECO:0000255" key="1">
    <source>
        <dbReference type="HAMAP-Rule" id="MF_00139"/>
    </source>
</evidence>
<evidence type="ECO:0000255" key="2">
    <source>
        <dbReference type="PROSITE-ProRule" id="PRU01202"/>
    </source>
</evidence>
<reference key="1">
    <citation type="journal article" date="2007" name="PLoS Genet.">
        <title>Patterns and implications of gene gain and loss in the evolution of Prochlorococcus.</title>
        <authorList>
            <person name="Kettler G.C."/>
            <person name="Martiny A.C."/>
            <person name="Huang K."/>
            <person name="Zucker J."/>
            <person name="Coleman M.L."/>
            <person name="Rodrigue S."/>
            <person name="Chen F."/>
            <person name="Lapidus A."/>
            <person name="Ferriera S."/>
            <person name="Johnson J."/>
            <person name="Steglich C."/>
            <person name="Church G.M."/>
            <person name="Richardson P."/>
            <person name="Chisholm S.W."/>
        </authorList>
    </citation>
    <scope>NUCLEOTIDE SEQUENCE [LARGE SCALE GENOMIC DNA]</scope>
    <source>
        <strain>MIT 9215</strain>
    </source>
</reference>
<dbReference type="EC" id="2.1.2.3" evidence="1"/>
<dbReference type="EC" id="3.5.4.10" evidence="1"/>
<dbReference type="EMBL" id="CP000825">
    <property type="protein sequence ID" value="ABV49907.1"/>
    <property type="molecule type" value="Genomic_DNA"/>
</dbReference>
<dbReference type="RefSeq" id="WP_012007066.1">
    <property type="nucleotide sequence ID" value="NC_009840.1"/>
</dbReference>
<dbReference type="SMR" id="A8G2S6"/>
<dbReference type="STRING" id="93060.P9215_02901"/>
<dbReference type="KEGG" id="pmh:P9215_02901"/>
<dbReference type="eggNOG" id="COG0138">
    <property type="taxonomic scope" value="Bacteria"/>
</dbReference>
<dbReference type="HOGENOM" id="CLU_016316_5_2_3"/>
<dbReference type="OrthoDB" id="9802065at2"/>
<dbReference type="UniPathway" id="UPA00074">
    <property type="reaction ID" value="UER00133"/>
</dbReference>
<dbReference type="UniPathway" id="UPA00074">
    <property type="reaction ID" value="UER00135"/>
</dbReference>
<dbReference type="Proteomes" id="UP000002014">
    <property type="component" value="Chromosome"/>
</dbReference>
<dbReference type="GO" id="GO:0005829">
    <property type="term" value="C:cytosol"/>
    <property type="evidence" value="ECO:0007669"/>
    <property type="project" value="TreeGrafter"/>
</dbReference>
<dbReference type="GO" id="GO:0003937">
    <property type="term" value="F:IMP cyclohydrolase activity"/>
    <property type="evidence" value="ECO:0007669"/>
    <property type="project" value="UniProtKB-UniRule"/>
</dbReference>
<dbReference type="GO" id="GO:0004643">
    <property type="term" value="F:phosphoribosylaminoimidazolecarboxamide formyltransferase activity"/>
    <property type="evidence" value="ECO:0007669"/>
    <property type="project" value="UniProtKB-UniRule"/>
</dbReference>
<dbReference type="GO" id="GO:0006189">
    <property type="term" value="P:'de novo' IMP biosynthetic process"/>
    <property type="evidence" value="ECO:0007669"/>
    <property type="project" value="UniProtKB-UniRule"/>
</dbReference>
<dbReference type="CDD" id="cd01421">
    <property type="entry name" value="IMPCH"/>
    <property type="match status" value="1"/>
</dbReference>
<dbReference type="FunFam" id="3.40.140.20:FF:000001">
    <property type="entry name" value="Bifunctional purine biosynthesis protein PurH"/>
    <property type="match status" value="1"/>
</dbReference>
<dbReference type="FunFam" id="3.40.50.1380:FF:000001">
    <property type="entry name" value="Bifunctional purine biosynthesis protein PurH"/>
    <property type="match status" value="1"/>
</dbReference>
<dbReference type="Gene3D" id="3.40.140.20">
    <property type="match status" value="2"/>
</dbReference>
<dbReference type="Gene3D" id="3.40.50.1380">
    <property type="entry name" value="Methylglyoxal synthase-like domain"/>
    <property type="match status" value="1"/>
</dbReference>
<dbReference type="HAMAP" id="MF_00139">
    <property type="entry name" value="PurH"/>
    <property type="match status" value="1"/>
</dbReference>
<dbReference type="InterPro" id="IPR024051">
    <property type="entry name" value="AICAR_Tfase_dup_dom_sf"/>
</dbReference>
<dbReference type="InterPro" id="IPR016193">
    <property type="entry name" value="Cytidine_deaminase-like"/>
</dbReference>
<dbReference type="InterPro" id="IPR011607">
    <property type="entry name" value="MGS-like_dom"/>
</dbReference>
<dbReference type="InterPro" id="IPR036914">
    <property type="entry name" value="MGS-like_dom_sf"/>
</dbReference>
<dbReference type="InterPro" id="IPR002695">
    <property type="entry name" value="PurH-like"/>
</dbReference>
<dbReference type="NCBIfam" id="NF002049">
    <property type="entry name" value="PRK00881.1"/>
    <property type="match status" value="1"/>
</dbReference>
<dbReference type="NCBIfam" id="TIGR00355">
    <property type="entry name" value="purH"/>
    <property type="match status" value="1"/>
</dbReference>
<dbReference type="PANTHER" id="PTHR11692:SF0">
    <property type="entry name" value="BIFUNCTIONAL PURINE BIOSYNTHESIS PROTEIN ATIC"/>
    <property type="match status" value="1"/>
</dbReference>
<dbReference type="PANTHER" id="PTHR11692">
    <property type="entry name" value="BIFUNCTIONAL PURINE BIOSYNTHESIS PROTEIN PURH"/>
    <property type="match status" value="1"/>
</dbReference>
<dbReference type="Pfam" id="PF01808">
    <property type="entry name" value="AICARFT_IMPCHas"/>
    <property type="match status" value="1"/>
</dbReference>
<dbReference type="Pfam" id="PF02142">
    <property type="entry name" value="MGS"/>
    <property type="match status" value="1"/>
</dbReference>
<dbReference type="PIRSF" id="PIRSF000414">
    <property type="entry name" value="AICARFT_IMPCHas"/>
    <property type="match status" value="1"/>
</dbReference>
<dbReference type="SMART" id="SM00798">
    <property type="entry name" value="AICARFT_IMPCHas"/>
    <property type="match status" value="1"/>
</dbReference>
<dbReference type="SMART" id="SM00851">
    <property type="entry name" value="MGS"/>
    <property type="match status" value="1"/>
</dbReference>
<dbReference type="SUPFAM" id="SSF53927">
    <property type="entry name" value="Cytidine deaminase-like"/>
    <property type="match status" value="1"/>
</dbReference>
<dbReference type="SUPFAM" id="SSF52335">
    <property type="entry name" value="Methylglyoxal synthase-like"/>
    <property type="match status" value="1"/>
</dbReference>
<dbReference type="PROSITE" id="PS51855">
    <property type="entry name" value="MGS"/>
    <property type="match status" value="1"/>
</dbReference>
<organism>
    <name type="scientific">Prochlorococcus marinus (strain MIT 9215)</name>
    <dbReference type="NCBI Taxonomy" id="93060"/>
    <lineage>
        <taxon>Bacteria</taxon>
        <taxon>Bacillati</taxon>
        <taxon>Cyanobacteriota</taxon>
        <taxon>Cyanophyceae</taxon>
        <taxon>Synechococcales</taxon>
        <taxon>Prochlorococcaceae</taxon>
        <taxon>Prochlorococcus</taxon>
    </lineage>
</organism>
<proteinExistence type="inferred from homology"/>
<gene>
    <name evidence="1" type="primary">purH</name>
    <name type="ordered locus">P9215_02901</name>
</gene>
<feature type="chain" id="PRO_1000057905" description="Bifunctional purine biosynthesis protein PurH">
    <location>
        <begin position="1"/>
        <end position="517"/>
    </location>
</feature>
<feature type="domain" description="MGS-like" evidence="2">
    <location>
        <begin position="1"/>
        <end position="145"/>
    </location>
</feature>
<comment type="catalytic activity">
    <reaction evidence="1">
        <text>(6R)-10-formyltetrahydrofolate + 5-amino-1-(5-phospho-beta-D-ribosyl)imidazole-4-carboxamide = 5-formamido-1-(5-phospho-D-ribosyl)imidazole-4-carboxamide + (6S)-5,6,7,8-tetrahydrofolate</text>
        <dbReference type="Rhea" id="RHEA:22192"/>
        <dbReference type="ChEBI" id="CHEBI:57453"/>
        <dbReference type="ChEBI" id="CHEBI:58467"/>
        <dbReference type="ChEBI" id="CHEBI:58475"/>
        <dbReference type="ChEBI" id="CHEBI:195366"/>
        <dbReference type="EC" id="2.1.2.3"/>
    </reaction>
</comment>
<comment type="catalytic activity">
    <reaction evidence="1">
        <text>IMP + H2O = 5-formamido-1-(5-phospho-D-ribosyl)imidazole-4-carboxamide</text>
        <dbReference type="Rhea" id="RHEA:18445"/>
        <dbReference type="ChEBI" id="CHEBI:15377"/>
        <dbReference type="ChEBI" id="CHEBI:58053"/>
        <dbReference type="ChEBI" id="CHEBI:58467"/>
        <dbReference type="EC" id="3.5.4.10"/>
    </reaction>
</comment>
<comment type="pathway">
    <text evidence="1">Purine metabolism; IMP biosynthesis via de novo pathway; 5-formamido-1-(5-phospho-D-ribosyl)imidazole-4-carboxamide from 5-amino-1-(5-phospho-D-ribosyl)imidazole-4-carboxamide (10-formyl THF route): step 1/1.</text>
</comment>
<comment type="pathway">
    <text evidence="1">Purine metabolism; IMP biosynthesis via de novo pathway; IMP from 5-formamido-1-(5-phospho-D-ribosyl)imidazole-4-carboxamide: step 1/1.</text>
</comment>
<comment type="domain">
    <text evidence="1">The IMP cyclohydrolase activity resides in the N-terminal region.</text>
</comment>
<comment type="similarity">
    <text evidence="1">Belongs to the PurH family.</text>
</comment>
<accession>A8G2S6</accession>
<keyword id="KW-0378">Hydrolase</keyword>
<keyword id="KW-0511">Multifunctional enzyme</keyword>
<keyword id="KW-0658">Purine biosynthesis</keyword>
<keyword id="KW-0808">Transferase</keyword>
<protein>
    <recommendedName>
        <fullName evidence="1">Bifunctional purine biosynthesis protein PurH</fullName>
    </recommendedName>
    <domain>
        <recommendedName>
            <fullName evidence="1">Phosphoribosylaminoimidazolecarboxamide formyltransferase</fullName>
            <ecNumber evidence="1">2.1.2.3</ecNumber>
        </recommendedName>
        <alternativeName>
            <fullName evidence="1">AICAR transformylase</fullName>
        </alternativeName>
    </domain>
    <domain>
        <recommendedName>
            <fullName evidence="1">IMP cyclohydrolase</fullName>
            <ecNumber evidence="1">3.5.4.10</ecNumber>
        </recommendedName>
        <alternativeName>
            <fullName evidence="1">ATIC</fullName>
        </alternativeName>
        <alternativeName>
            <fullName evidence="1">IMP synthase</fullName>
        </alternativeName>
        <alternativeName>
            <fullName evidence="1">Inosinicase</fullName>
        </alternativeName>
    </domain>
</protein>
<sequence>MSPLALVSVSDKKNIIQFCKELIENFNYKILSSGGTAKHLIEAKIPVIKVADFTNSQEILGGRVKTLHPKIHGGILAKRTDEEHQIDIKANDLELIDLVVVNLYPFKKTIDQGAKWEDAIENIDIGGPSMIRSAAKNHKYVSVLVDPSQYQNFLEESKKGELKESYKAKLALEAFQHTADYDTAISNWISKERGFQSSKHIKSYPLIKSLRYGENPHQKAFWYGLSNIGWNSAKQLQGKDLSYNNLLDLESALTTVLEFGYAEKDELTTDTFASIILKHNNPCGASVSNSASQAFLNALECDSVSAFGGIVAFNSNVDSETAIQLKDIFLECVVAPSFDEKALEILKVKKNLRILKLSKDQLPKNNQTSTKSIMGGLLVQDTDDNKEKSEGWISVTNKNPSNQMNLDLNFAWKICKHVKSNAIVIAKDQKTIGIGAGQMNRVGAAKIALKAAGKLCSGAVLASDGFFPFADTVELANEYGIKAIIQPGGSLRDQESIDMCNAKGIAMIFTQKRHFLH</sequence>
<name>PUR9_PROM2</name>